<dbReference type="EMBL" id="CP000029">
    <property type="protein sequence ID" value="AAW53568.1"/>
    <property type="molecule type" value="Genomic_DNA"/>
</dbReference>
<dbReference type="RefSeq" id="WP_001832298.1">
    <property type="nucleotide sequence ID" value="NC_002976.3"/>
</dbReference>
<dbReference type="SMR" id="Q5HRL5"/>
<dbReference type="STRING" id="176279.SERP0178"/>
<dbReference type="GeneID" id="93781685"/>
<dbReference type="KEGG" id="ser:SERP0178"/>
<dbReference type="eggNOG" id="COG0080">
    <property type="taxonomic scope" value="Bacteria"/>
</dbReference>
<dbReference type="HOGENOM" id="CLU_074237_2_1_9"/>
<dbReference type="Proteomes" id="UP000000531">
    <property type="component" value="Chromosome"/>
</dbReference>
<dbReference type="GO" id="GO:0022625">
    <property type="term" value="C:cytosolic large ribosomal subunit"/>
    <property type="evidence" value="ECO:0007669"/>
    <property type="project" value="TreeGrafter"/>
</dbReference>
<dbReference type="GO" id="GO:0070180">
    <property type="term" value="F:large ribosomal subunit rRNA binding"/>
    <property type="evidence" value="ECO:0007669"/>
    <property type="project" value="UniProtKB-UniRule"/>
</dbReference>
<dbReference type="GO" id="GO:0003735">
    <property type="term" value="F:structural constituent of ribosome"/>
    <property type="evidence" value="ECO:0007669"/>
    <property type="project" value="InterPro"/>
</dbReference>
<dbReference type="GO" id="GO:0006412">
    <property type="term" value="P:translation"/>
    <property type="evidence" value="ECO:0007669"/>
    <property type="project" value="UniProtKB-UniRule"/>
</dbReference>
<dbReference type="CDD" id="cd00349">
    <property type="entry name" value="Ribosomal_L11"/>
    <property type="match status" value="1"/>
</dbReference>
<dbReference type="FunFam" id="1.10.10.250:FF:000001">
    <property type="entry name" value="50S ribosomal protein L11"/>
    <property type="match status" value="1"/>
</dbReference>
<dbReference type="FunFam" id="3.30.1550.10:FF:000001">
    <property type="entry name" value="50S ribosomal protein L11"/>
    <property type="match status" value="1"/>
</dbReference>
<dbReference type="Gene3D" id="1.10.10.250">
    <property type="entry name" value="Ribosomal protein L11, C-terminal domain"/>
    <property type="match status" value="1"/>
</dbReference>
<dbReference type="Gene3D" id="3.30.1550.10">
    <property type="entry name" value="Ribosomal protein L11/L12, N-terminal domain"/>
    <property type="match status" value="1"/>
</dbReference>
<dbReference type="HAMAP" id="MF_00736">
    <property type="entry name" value="Ribosomal_uL11"/>
    <property type="match status" value="1"/>
</dbReference>
<dbReference type="InterPro" id="IPR000911">
    <property type="entry name" value="Ribosomal_uL11"/>
</dbReference>
<dbReference type="InterPro" id="IPR006519">
    <property type="entry name" value="Ribosomal_uL11_bac-typ"/>
</dbReference>
<dbReference type="InterPro" id="IPR020783">
    <property type="entry name" value="Ribosomal_uL11_C"/>
</dbReference>
<dbReference type="InterPro" id="IPR036769">
    <property type="entry name" value="Ribosomal_uL11_C_sf"/>
</dbReference>
<dbReference type="InterPro" id="IPR020784">
    <property type="entry name" value="Ribosomal_uL11_N"/>
</dbReference>
<dbReference type="InterPro" id="IPR036796">
    <property type="entry name" value="Ribosomal_uL11_N_sf"/>
</dbReference>
<dbReference type="NCBIfam" id="TIGR01632">
    <property type="entry name" value="L11_bact"/>
    <property type="match status" value="1"/>
</dbReference>
<dbReference type="PANTHER" id="PTHR11661">
    <property type="entry name" value="60S RIBOSOMAL PROTEIN L12"/>
    <property type="match status" value="1"/>
</dbReference>
<dbReference type="PANTHER" id="PTHR11661:SF1">
    <property type="entry name" value="LARGE RIBOSOMAL SUBUNIT PROTEIN UL11M"/>
    <property type="match status" value="1"/>
</dbReference>
<dbReference type="Pfam" id="PF00298">
    <property type="entry name" value="Ribosomal_L11"/>
    <property type="match status" value="1"/>
</dbReference>
<dbReference type="Pfam" id="PF03946">
    <property type="entry name" value="Ribosomal_L11_N"/>
    <property type="match status" value="1"/>
</dbReference>
<dbReference type="SMART" id="SM00649">
    <property type="entry name" value="RL11"/>
    <property type="match status" value="1"/>
</dbReference>
<dbReference type="SUPFAM" id="SSF54747">
    <property type="entry name" value="Ribosomal L11/L12e N-terminal domain"/>
    <property type="match status" value="1"/>
</dbReference>
<dbReference type="SUPFAM" id="SSF46906">
    <property type="entry name" value="Ribosomal protein L11, C-terminal domain"/>
    <property type="match status" value="1"/>
</dbReference>
<feature type="chain" id="PRO_0000104369" description="Large ribosomal subunit protein uL11">
    <location>
        <begin position="1"/>
        <end position="140"/>
    </location>
</feature>
<comment type="function">
    <text evidence="1">Forms part of the ribosomal stalk which helps the ribosome interact with GTP-bound translation factors.</text>
</comment>
<comment type="subunit">
    <text evidence="1">Part of the ribosomal stalk of the 50S ribosomal subunit. Interacts with L10 and the large rRNA to form the base of the stalk. L10 forms an elongated spine to which L12 dimers bind in a sequential fashion forming a multimeric L10(L12)X complex.</text>
</comment>
<comment type="PTM">
    <text evidence="1">One or more lysine residues are methylated.</text>
</comment>
<comment type="similarity">
    <text evidence="1">Belongs to the universal ribosomal protein uL11 family.</text>
</comment>
<sequence>MAKKVEKVVKLQIPAGKANPAPPVGPALGQAGVNIMGFCKEFNARTQEQAGLIIPVEISVYEDRSFTFITKTPPAPVLLKKAAGVEKGSGEPNKTKVATVTKDQVREIAQTKMQDLNAADEEAAMRIIEGTARSMGITVQ</sequence>
<accession>Q5HRL5</accession>
<gene>
    <name evidence="1" type="primary">rplK</name>
    <name type="ordered locus">SERP0178</name>
</gene>
<evidence type="ECO:0000255" key="1">
    <source>
        <dbReference type="HAMAP-Rule" id="MF_00736"/>
    </source>
</evidence>
<evidence type="ECO:0000305" key="2"/>
<reference key="1">
    <citation type="journal article" date="2005" name="J. Bacteriol.">
        <title>Insights on evolution of virulence and resistance from the complete genome analysis of an early methicillin-resistant Staphylococcus aureus strain and a biofilm-producing methicillin-resistant Staphylococcus epidermidis strain.</title>
        <authorList>
            <person name="Gill S.R."/>
            <person name="Fouts D.E."/>
            <person name="Archer G.L."/>
            <person name="Mongodin E.F."/>
            <person name="DeBoy R.T."/>
            <person name="Ravel J."/>
            <person name="Paulsen I.T."/>
            <person name="Kolonay J.F."/>
            <person name="Brinkac L.M."/>
            <person name="Beanan M.J."/>
            <person name="Dodson R.J."/>
            <person name="Daugherty S.C."/>
            <person name="Madupu R."/>
            <person name="Angiuoli S.V."/>
            <person name="Durkin A.S."/>
            <person name="Haft D.H."/>
            <person name="Vamathevan J.J."/>
            <person name="Khouri H."/>
            <person name="Utterback T.R."/>
            <person name="Lee C."/>
            <person name="Dimitrov G."/>
            <person name="Jiang L."/>
            <person name="Qin H."/>
            <person name="Weidman J."/>
            <person name="Tran K."/>
            <person name="Kang K.H."/>
            <person name="Hance I.R."/>
            <person name="Nelson K.E."/>
            <person name="Fraser C.M."/>
        </authorList>
    </citation>
    <scope>NUCLEOTIDE SEQUENCE [LARGE SCALE GENOMIC DNA]</scope>
    <source>
        <strain>ATCC 35984 / DSM 28319 / BCRC 17069 / CCUG 31568 / BM 3577 / RP62A</strain>
    </source>
</reference>
<proteinExistence type="inferred from homology"/>
<protein>
    <recommendedName>
        <fullName evidence="1">Large ribosomal subunit protein uL11</fullName>
    </recommendedName>
    <alternativeName>
        <fullName evidence="2">50S ribosomal protein L11</fullName>
    </alternativeName>
</protein>
<organism>
    <name type="scientific">Staphylococcus epidermidis (strain ATCC 35984 / DSM 28319 / BCRC 17069 / CCUG 31568 / BM 3577 / RP62A)</name>
    <dbReference type="NCBI Taxonomy" id="176279"/>
    <lineage>
        <taxon>Bacteria</taxon>
        <taxon>Bacillati</taxon>
        <taxon>Bacillota</taxon>
        <taxon>Bacilli</taxon>
        <taxon>Bacillales</taxon>
        <taxon>Staphylococcaceae</taxon>
        <taxon>Staphylococcus</taxon>
    </lineage>
</organism>
<name>RL11_STAEQ</name>
<keyword id="KW-0488">Methylation</keyword>
<keyword id="KW-1185">Reference proteome</keyword>
<keyword id="KW-0687">Ribonucleoprotein</keyword>
<keyword id="KW-0689">Ribosomal protein</keyword>
<keyword id="KW-0694">RNA-binding</keyword>
<keyword id="KW-0699">rRNA-binding</keyword>